<organism>
    <name type="scientific">Pongo abelii</name>
    <name type="common">Sumatran orangutan</name>
    <name type="synonym">Pongo pygmaeus abelii</name>
    <dbReference type="NCBI Taxonomy" id="9601"/>
    <lineage>
        <taxon>Eukaryota</taxon>
        <taxon>Metazoa</taxon>
        <taxon>Chordata</taxon>
        <taxon>Craniata</taxon>
        <taxon>Vertebrata</taxon>
        <taxon>Euteleostomi</taxon>
        <taxon>Mammalia</taxon>
        <taxon>Eutheria</taxon>
        <taxon>Euarchontoglires</taxon>
        <taxon>Primates</taxon>
        <taxon>Haplorrhini</taxon>
        <taxon>Catarrhini</taxon>
        <taxon>Hominidae</taxon>
        <taxon>Pongo</taxon>
    </lineage>
</organism>
<reference key="1">
    <citation type="submission" date="2004-11" db="EMBL/GenBank/DDBJ databases">
        <authorList>
            <consortium name="The German cDNA consortium"/>
        </authorList>
    </citation>
    <scope>NUCLEOTIDE SEQUENCE [LARGE SCALE MRNA]</scope>
    <source>
        <tissue>Kidney</tissue>
    </source>
</reference>
<sequence length="266" mass="30900">MQGSTRRMSVMTDVHRRFLQLLMTHGVLEEWDVKRLQRHCYKVHDRNATVDKLEDFINNINSVLESLYIEIKRGVTEDDGRPIYALVNLATTSISKMATDFAENELDLFRKALELIIDSETGFGSSTNILNLVDQLKGKKMRKKEAEQVLQKFVQNKWLIEKEGEFTLHGRAILEMEQYIRETYPDAVKICNICHSLLIQGQSCETCGIRMHLPCVAKYFQSNAEPRCPHCNDYWPHEIPKVFDPEKERESGVSKSNKKSLRSRQH</sequence>
<feature type="chain" id="PRO_0000270946" description="Non-structural maintenance of chromosomes element 1 homolog">
    <location>
        <begin position="1"/>
        <end position="266"/>
    </location>
</feature>
<feature type="zinc finger region" description="RING-type; atypical" evidence="2">
    <location>
        <begin position="191"/>
        <end position="232"/>
    </location>
</feature>
<feature type="region of interest" description="Interaction with NSMCE3" evidence="1">
    <location>
        <begin position="1"/>
        <end position="102"/>
    </location>
</feature>
<feature type="region of interest" description="Disordered" evidence="3">
    <location>
        <begin position="245"/>
        <end position="266"/>
    </location>
</feature>
<feature type="compositionally biased region" description="Basic residues" evidence="3">
    <location>
        <begin position="256"/>
        <end position="266"/>
    </location>
</feature>
<feature type="modified residue" description="Phosphoserine" evidence="1">
    <location>
        <position position="251"/>
    </location>
</feature>
<proteinExistence type="evidence at transcript level"/>
<gene>
    <name type="primary">NSMCE1</name>
</gene>
<name>NSE1_PONAB</name>
<protein>
    <recommendedName>
        <fullName>Non-structural maintenance of chromosomes element 1 homolog</fullName>
        <shortName>Non-SMC element 1 homolog</shortName>
        <ecNumber evidence="1">2.3.2.27</ecNumber>
    </recommendedName>
</protein>
<dbReference type="EC" id="2.3.2.27" evidence="1"/>
<dbReference type="EMBL" id="CR858866">
    <property type="protein sequence ID" value="CAH91065.1"/>
    <property type="molecule type" value="mRNA"/>
</dbReference>
<dbReference type="RefSeq" id="NP_001125616.1">
    <property type="nucleotide sequence ID" value="NM_001132144.1"/>
</dbReference>
<dbReference type="BMRB" id="Q5RAZ5"/>
<dbReference type="SMR" id="Q5RAZ5"/>
<dbReference type="FunCoup" id="Q5RAZ5">
    <property type="interactions" value="2263"/>
</dbReference>
<dbReference type="STRING" id="9601.ENSPPYP00000008152"/>
<dbReference type="GeneID" id="100172534"/>
<dbReference type="KEGG" id="pon:100172534"/>
<dbReference type="CTD" id="197370"/>
<dbReference type="InParanoid" id="Q5RAZ5"/>
<dbReference type="OrthoDB" id="185455at2759"/>
<dbReference type="Proteomes" id="UP000001595">
    <property type="component" value="Unplaced"/>
</dbReference>
<dbReference type="GO" id="GO:0000781">
    <property type="term" value="C:chromosome, telomeric region"/>
    <property type="evidence" value="ECO:0007669"/>
    <property type="project" value="UniProtKB-SubCell"/>
</dbReference>
<dbReference type="GO" id="GO:0005634">
    <property type="term" value="C:nucleus"/>
    <property type="evidence" value="ECO:0007669"/>
    <property type="project" value="UniProtKB-SubCell"/>
</dbReference>
<dbReference type="GO" id="GO:0030915">
    <property type="term" value="C:Smc5-Smc6 complex"/>
    <property type="evidence" value="ECO:0000250"/>
    <property type="project" value="UniProtKB"/>
</dbReference>
<dbReference type="GO" id="GO:0046983">
    <property type="term" value="F:protein dimerization activity"/>
    <property type="evidence" value="ECO:0000250"/>
    <property type="project" value="UniProtKB"/>
</dbReference>
<dbReference type="GO" id="GO:0061630">
    <property type="term" value="F:ubiquitin protein ligase activity"/>
    <property type="evidence" value="ECO:0000250"/>
    <property type="project" value="UniProtKB"/>
</dbReference>
<dbReference type="GO" id="GO:0008270">
    <property type="term" value="F:zinc ion binding"/>
    <property type="evidence" value="ECO:0007669"/>
    <property type="project" value="UniProtKB-KW"/>
</dbReference>
<dbReference type="GO" id="GO:0006974">
    <property type="term" value="P:DNA damage response"/>
    <property type="evidence" value="ECO:0000250"/>
    <property type="project" value="UniProtKB"/>
</dbReference>
<dbReference type="GO" id="GO:0000724">
    <property type="term" value="P:double-strand break repair via homologous recombination"/>
    <property type="evidence" value="ECO:0007669"/>
    <property type="project" value="TreeGrafter"/>
</dbReference>
<dbReference type="CDD" id="cd16493">
    <property type="entry name" value="RING-CH-C4HC3_NSE1"/>
    <property type="match status" value="1"/>
</dbReference>
<dbReference type="FunFam" id="1.10.10.10:FF:000270">
    <property type="entry name" value="Non-structural maintenance of chromosomes element 1 homolog"/>
    <property type="match status" value="1"/>
</dbReference>
<dbReference type="FunFam" id="3.90.1150.220:FF:000001">
    <property type="entry name" value="Non-structural maintenance of chromosomes element 1 homolog"/>
    <property type="match status" value="1"/>
</dbReference>
<dbReference type="FunFam" id="3.30.40.10:FF:000298">
    <property type="entry name" value="non-structural maintenance of chromosomes element 1 homolog"/>
    <property type="match status" value="1"/>
</dbReference>
<dbReference type="Gene3D" id="3.90.1150.220">
    <property type="match status" value="1"/>
</dbReference>
<dbReference type="Gene3D" id="1.10.10.10">
    <property type="entry name" value="Winged helix-like DNA-binding domain superfamily/Winged helix DNA-binding domain"/>
    <property type="match status" value="1"/>
</dbReference>
<dbReference type="Gene3D" id="3.30.40.10">
    <property type="entry name" value="Zinc/RING finger domain, C3HC4 (zinc finger)"/>
    <property type="match status" value="1"/>
</dbReference>
<dbReference type="InterPro" id="IPR011513">
    <property type="entry name" value="Nse1"/>
</dbReference>
<dbReference type="InterPro" id="IPR014857">
    <property type="entry name" value="Nse1_RING_C4HC3-type"/>
</dbReference>
<dbReference type="InterPro" id="IPR002219">
    <property type="entry name" value="PE/DAG-bd"/>
</dbReference>
<dbReference type="InterPro" id="IPR036388">
    <property type="entry name" value="WH-like_DNA-bd_sf"/>
</dbReference>
<dbReference type="InterPro" id="IPR001841">
    <property type="entry name" value="Znf_RING"/>
</dbReference>
<dbReference type="InterPro" id="IPR013083">
    <property type="entry name" value="Znf_RING/FYVE/PHD"/>
</dbReference>
<dbReference type="PANTHER" id="PTHR20973">
    <property type="entry name" value="NON-SMC ELEMENT 1-RELATED"/>
    <property type="match status" value="1"/>
</dbReference>
<dbReference type="PANTHER" id="PTHR20973:SF0">
    <property type="entry name" value="NON-STRUCTURAL MAINTENANCE OF CHROMOSOMES ELEMENT 1 HOMOLOG"/>
    <property type="match status" value="1"/>
</dbReference>
<dbReference type="Pfam" id="PF07574">
    <property type="entry name" value="SMC_Nse1"/>
    <property type="match status" value="1"/>
</dbReference>
<dbReference type="Pfam" id="PF08746">
    <property type="entry name" value="zf-RING-like"/>
    <property type="match status" value="1"/>
</dbReference>
<dbReference type="SUPFAM" id="SSF57850">
    <property type="entry name" value="RING/U-box"/>
    <property type="match status" value="1"/>
</dbReference>
<dbReference type="PROSITE" id="PS50089">
    <property type="entry name" value="ZF_RING_2"/>
    <property type="match status" value="1"/>
</dbReference>
<accession>Q5RAZ5</accession>
<comment type="function">
    <text evidence="1">RING-type zinc finger-containing E3 ubiquitin ligase that assembles with melanoma antigen protein (MAGE) to catalyze the direct transfer of ubiquitin from E2 ubiquitin-conjugating enzyme to a specific substrate. Within MAGE-RING ubiquitin ligase complex, MAGE stimulates and specifies ubiquitin ligase activity likely through recruitment and/or stabilization of the E2 ubiquitin-conjugating enzyme at the E3:substrate complex. Involved in maintenance of genome integrity, DNA damage response and DNA repair. NSMCE3/MAGEG1 and NSMCE1 ubiquitin ligase are components of SMC5-SMC6 complex and may positively regulate homologous recombination-mediated DNA repair.</text>
</comment>
<comment type="catalytic activity">
    <reaction evidence="1">
        <text>S-ubiquitinyl-[E2 ubiquitin-conjugating enzyme]-L-cysteine + [acceptor protein]-L-lysine = [E2 ubiquitin-conjugating enzyme]-L-cysteine + N(6)-ubiquitinyl-[acceptor protein]-L-lysine.</text>
        <dbReference type="EC" id="2.3.2.27"/>
    </reaction>
</comment>
<comment type="subunit">
    <text evidence="1">Component of the SMC5-SMC6 complex which consists at least of SMC5, SMC6, NSMCE2, NSMCE1, NSMCE4A or EID3 and NSMCE3. NSMCE1, NSMCE4A or EID3 and NSMCE3 probably form a subcomplex that bridges the head domains of the SMC5-SMC6 heterodimer. Interacts with NSMCE3.</text>
</comment>
<comment type="subcellular location">
    <subcellularLocation>
        <location evidence="1">Nucleus</location>
    </subcellularLocation>
    <subcellularLocation>
        <location evidence="1">Chromosome</location>
        <location evidence="1">Telomere</location>
    </subcellularLocation>
</comment>
<comment type="PTM">
    <text evidence="1">Ubiquitinated.</text>
</comment>
<comment type="similarity">
    <text evidence="4">Belongs to the NSE1 family.</text>
</comment>
<keyword id="KW-0158">Chromosome</keyword>
<keyword id="KW-0227">DNA damage</keyword>
<keyword id="KW-0233">DNA recombination</keyword>
<keyword id="KW-0234">DNA repair</keyword>
<keyword id="KW-0479">Metal-binding</keyword>
<keyword id="KW-0539">Nucleus</keyword>
<keyword id="KW-0597">Phosphoprotein</keyword>
<keyword id="KW-1185">Reference proteome</keyword>
<keyword id="KW-0779">Telomere</keyword>
<keyword id="KW-0808">Transferase</keyword>
<keyword id="KW-0832">Ubl conjugation</keyword>
<keyword id="KW-0833">Ubl conjugation pathway</keyword>
<keyword id="KW-0862">Zinc</keyword>
<keyword id="KW-0863">Zinc-finger</keyword>
<evidence type="ECO:0000250" key="1">
    <source>
        <dbReference type="UniProtKB" id="Q8WV22"/>
    </source>
</evidence>
<evidence type="ECO:0000255" key="2">
    <source>
        <dbReference type="PROSITE-ProRule" id="PRU00175"/>
    </source>
</evidence>
<evidence type="ECO:0000256" key="3">
    <source>
        <dbReference type="SAM" id="MobiDB-lite"/>
    </source>
</evidence>
<evidence type="ECO:0000305" key="4"/>